<name>IDL2_ARATH</name>
<organism>
    <name type="scientific">Arabidopsis thaliana</name>
    <name type="common">Mouse-ear cress</name>
    <dbReference type="NCBI Taxonomy" id="3702"/>
    <lineage>
        <taxon>Eukaryota</taxon>
        <taxon>Viridiplantae</taxon>
        <taxon>Streptophyta</taxon>
        <taxon>Embryophyta</taxon>
        <taxon>Tracheophyta</taxon>
        <taxon>Spermatophyta</taxon>
        <taxon>Magnoliopsida</taxon>
        <taxon>eudicotyledons</taxon>
        <taxon>Gunneridae</taxon>
        <taxon>Pentapetalae</taxon>
        <taxon>rosids</taxon>
        <taxon>malvids</taxon>
        <taxon>Brassicales</taxon>
        <taxon>Brassicaceae</taxon>
        <taxon>Camelineae</taxon>
        <taxon>Arabidopsis</taxon>
    </lineage>
</organism>
<protein>
    <recommendedName>
        <fullName>Protein IDA-LIKE 2</fullName>
    </recommendedName>
</protein>
<comment type="function">
    <text evidence="5">May be involved in floral abscission.</text>
</comment>
<comment type="subcellular location">
    <subcellularLocation>
        <location evidence="1">Secreted</location>
        <location evidence="1">Extracellular space</location>
    </subcellularLocation>
</comment>
<comment type="tissue specificity">
    <text evidence="4 5">Expressed in leaves, buds, flowers, seedlings and seeds. Detected at the base of pedicel, in the floral and funicule abscission zones and in vascular tissues.</text>
</comment>
<comment type="miscellaneous">
    <text>IDL2 is only partially redundant with IDA.</text>
</comment>
<evidence type="ECO:0000250" key="1"/>
<evidence type="ECO:0000255" key="2"/>
<evidence type="ECO:0000256" key="3">
    <source>
        <dbReference type="SAM" id="MobiDB-lite"/>
    </source>
</evidence>
<evidence type="ECO:0000269" key="4">
    <source>
    </source>
</evidence>
<evidence type="ECO:0000269" key="5">
    <source>
    </source>
</evidence>
<dbReference type="EMBL" id="AY642385">
    <property type="protein sequence ID" value="AAT66015.1"/>
    <property type="molecule type" value="Genomic_DNA"/>
</dbReference>
<dbReference type="EMBL" id="AB010076">
    <property type="status" value="NOT_ANNOTATED_CDS"/>
    <property type="molecule type" value="Genomic_DNA"/>
</dbReference>
<dbReference type="EMBL" id="CP002688">
    <property type="protein sequence ID" value="AED97934.1"/>
    <property type="molecule type" value="Genomic_DNA"/>
</dbReference>
<dbReference type="RefSeq" id="NP_001078796.1">
    <property type="nucleotide sequence ID" value="NM_001085327.3"/>
</dbReference>
<dbReference type="PDB" id="7OGQ">
    <property type="method" value="X-ray"/>
    <property type="resolution" value="2.20 A"/>
    <property type="chains" value="CCC=70-83"/>
</dbReference>
<dbReference type="PDBsum" id="7OGQ"/>
<dbReference type="SMR" id="Q6DUW9"/>
<dbReference type="STRING" id="3702.Q6DUW9"/>
<dbReference type="PaxDb" id="3702-AT5G64667.1"/>
<dbReference type="EnsemblPlants" id="AT5G64667.1">
    <property type="protein sequence ID" value="AT5G64667.1"/>
    <property type="gene ID" value="AT5G64667"/>
</dbReference>
<dbReference type="GeneID" id="5008332"/>
<dbReference type="Gramene" id="AT5G64667.1">
    <property type="protein sequence ID" value="AT5G64667.1"/>
    <property type="gene ID" value="AT5G64667"/>
</dbReference>
<dbReference type="KEGG" id="ath:AT5G64667"/>
<dbReference type="Araport" id="AT5G64667"/>
<dbReference type="TAIR" id="AT5G64667">
    <property type="gene designation" value="IDL2"/>
</dbReference>
<dbReference type="eggNOG" id="ENOG502R85G">
    <property type="taxonomic scope" value="Eukaryota"/>
</dbReference>
<dbReference type="HOGENOM" id="CLU_186343_0_1_1"/>
<dbReference type="InParanoid" id="Q6DUW9"/>
<dbReference type="OMA" id="IGLLSWH"/>
<dbReference type="OrthoDB" id="1935957at2759"/>
<dbReference type="PhylomeDB" id="Q6DUW9"/>
<dbReference type="PRO" id="PR:Q6DUW9"/>
<dbReference type="Proteomes" id="UP000006548">
    <property type="component" value="Chromosome 5"/>
</dbReference>
<dbReference type="ExpressionAtlas" id="Q6DUW9">
    <property type="expression patterns" value="baseline and differential"/>
</dbReference>
<dbReference type="GO" id="GO:0005576">
    <property type="term" value="C:extracellular region"/>
    <property type="evidence" value="ECO:0007669"/>
    <property type="project" value="UniProtKB-SubCell"/>
</dbReference>
<dbReference type="GO" id="GO:0010227">
    <property type="term" value="P:floral organ abscission"/>
    <property type="evidence" value="ECO:0000315"/>
    <property type="project" value="TAIR"/>
</dbReference>
<dbReference type="InterPro" id="IPR039639">
    <property type="entry name" value="IDA-like"/>
</dbReference>
<dbReference type="PANTHER" id="PTHR33599:SF15">
    <property type="entry name" value="PROTEIN IDA-LIKE 2"/>
    <property type="match status" value="1"/>
</dbReference>
<dbReference type="PANTHER" id="PTHR33599">
    <property type="entry name" value="PROTEIN IDA-LIKE 5"/>
    <property type="match status" value="1"/>
</dbReference>
<proteinExistence type="evidence at protein level"/>
<gene>
    <name type="primary">IDL2</name>
    <name type="ordered locus">At5g64667</name>
    <name type="ORF">MUB3</name>
</gene>
<keyword id="KW-0002">3D-structure</keyword>
<keyword id="KW-1185">Reference proteome</keyword>
<keyword id="KW-0964">Secreted</keyword>
<keyword id="KW-0732">Signal</keyword>
<feature type="signal peptide" evidence="2">
    <location>
        <begin position="1"/>
        <end position="35"/>
    </location>
</feature>
<feature type="chain" id="PRO_0000383590" description="Protein IDA-LIKE 2">
    <location>
        <begin position="36"/>
        <end position="95"/>
    </location>
</feature>
<feature type="region of interest" description="Disordered" evidence="3">
    <location>
        <begin position="75"/>
        <end position="95"/>
    </location>
</feature>
<accession>Q6DUW9</accession>
<sequence length="95" mass="10712">MSSRNQRSRITSSFFVSFFTRTILLLLILLLGFCNGARTNTNVFNSKPHKKHNDAVSSSTKQFLGFLPRHFPVPASGPSRKHNDIGLLSWHRSSP</sequence>
<reference key="1">
    <citation type="journal article" date="2003" name="Plant Cell">
        <title>Inflorescence deficient in abscission controls floral organ abscission in Arabidopsis and identifies a novel family of putative ligands in plants.</title>
        <authorList>
            <person name="Butenko M.A."/>
            <person name="Patterson S.E."/>
            <person name="Grini P.E."/>
            <person name="Stenvik G.-E."/>
            <person name="Amundsen S.S."/>
            <person name="Mandal A."/>
            <person name="Aalen R.B."/>
        </authorList>
    </citation>
    <scope>NUCLEOTIDE SEQUENCE [GENOMIC DNA]</scope>
    <scope>TISSUE SPECIFICITY</scope>
</reference>
<reference key="2">
    <citation type="journal article" date="1998" name="DNA Res.">
        <title>Structural analysis of Arabidopsis thaliana chromosome 5. IV. Sequence features of the regions of 1,456,315 bp covered by nineteen physically assigned P1 and TAC clones.</title>
        <authorList>
            <person name="Sato S."/>
            <person name="Kaneko T."/>
            <person name="Kotani H."/>
            <person name="Nakamura Y."/>
            <person name="Asamizu E."/>
            <person name="Miyajima N."/>
            <person name="Tabata S."/>
        </authorList>
    </citation>
    <scope>NUCLEOTIDE SEQUENCE [LARGE SCALE GENOMIC DNA]</scope>
    <source>
        <strain>cv. Columbia</strain>
    </source>
</reference>
<reference key="3">
    <citation type="journal article" date="2017" name="Plant J.">
        <title>Araport11: a complete reannotation of the Arabidopsis thaliana reference genome.</title>
        <authorList>
            <person name="Cheng C.Y."/>
            <person name="Krishnakumar V."/>
            <person name="Chan A.P."/>
            <person name="Thibaud-Nissen F."/>
            <person name="Schobel S."/>
            <person name="Town C.D."/>
        </authorList>
    </citation>
    <scope>GENOME REANNOTATION</scope>
    <source>
        <strain>cv. Columbia</strain>
    </source>
</reference>
<reference key="4">
    <citation type="journal article" date="2008" name="Plant Cell">
        <title>The EPIP peptide of INFLORESCENCE DEFICIENT IN ABSCISSION is sufficient to induce abscission in arabidopsis through the receptor-like kinases HAESA and HAESA-LIKE2.</title>
        <authorList>
            <person name="Stenvik G.-E."/>
            <person name="Tandstad N.M."/>
            <person name="Guo Y."/>
            <person name="Shi C.-L."/>
            <person name="Kristiansen W."/>
            <person name="Holmgren A."/>
            <person name="Clark S.E."/>
            <person name="Aalen R.B."/>
            <person name="Butenko M.A."/>
        </authorList>
    </citation>
    <scope>FUNCTION</scope>
    <scope>TISSUE SPECIFICITY</scope>
</reference>